<organism>
    <name type="scientific">Hordeum vulgare</name>
    <name type="common">Barley</name>
    <dbReference type="NCBI Taxonomy" id="4513"/>
    <lineage>
        <taxon>Eukaryota</taxon>
        <taxon>Viridiplantae</taxon>
        <taxon>Streptophyta</taxon>
        <taxon>Embryophyta</taxon>
        <taxon>Tracheophyta</taxon>
        <taxon>Spermatophyta</taxon>
        <taxon>Magnoliopsida</taxon>
        <taxon>Liliopsida</taxon>
        <taxon>Poales</taxon>
        <taxon>Poaceae</taxon>
        <taxon>BOP clade</taxon>
        <taxon>Pooideae</taxon>
        <taxon>Triticodae</taxon>
        <taxon>Triticeae</taxon>
        <taxon>Hordeinae</taxon>
        <taxon>Hordeum</taxon>
    </lineage>
</organism>
<evidence type="ECO:0000255" key="1">
    <source>
        <dbReference type="HAMAP-Rule" id="MF_01393"/>
    </source>
</evidence>
<sequence length="247" mass="27306">MNIIPCSIKTLKGLYDISGVEVGQHFYWQIGGFQIHAQVLITSWVVITILLGSVVIAVRNPQTIPTDGQNFFEYVLEFIRDLSKTQIGEEYGPWVPFIGTMFLFIFVSNWSGALLPWKIIELPHGELAAPTNDINTTVALALLTSAAYFYAGLSKKGLSYFEKYIKPTPILLPINILEDFTKPLSLSFRLFGNILADELVVVVLVSLVPLVIPIPVMFLGLFTSGIQALIFATLAAAYIGESMEGHH</sequence>
<dbReference type="EMBL" id="EF115541">
    <property type="protein sequence ID" value="ABK79407.1"/>
    <property type="molecule type" value="Genomic_DNA"/>
</dbReference>
<dbReference type="RefSeq" id="YP_010144419.1">
    <property type="nucleotide sequence ID" value="NC_056985.1"/>
</dbReference>
<dbReference type="RefSeq" id="YP_874647.1">
    <property type="nucleotide sequence ID" value="NC_008590.1"/>
</dbReference>
<dbReference type="SMR" id="A1E9I5"/>
<dbReference type="GeneID" id="4525124"/>
<dbReference type="GeneID" id="67140690"/>
<dbReference type="OMA" id="FLSVHWF"/>
<dbReference type="GO" id="GO:0009535">
    <property type="term" value="C:chloroplast thylakoid membrane"/>
    <property type="evidence" value="ECO:0007669"/>
    <property type="project" value="UniProtKB-SubCell"/>
</dbReference>
<dbReference type="GO" id="GO:0005886">
    <property type="term" value="C:plasma membrane"/>
    <property type="evidence" value="ECO:0007669"/>
    <property type="project" value="UniProtKB-UniRule"/>
</dbReference>
<dbReference type="GO" id="GO:0045259">
    <property type="term" value="C:proton-transporting ATP synthase complex"/>
    <property type="evidence" value="ECO:0007669"/>
    <property type="project" value="UniProtKB-KW"/>
</dbReference>
<dbReference type="GO" id="GO:0046933">
    <property type="term" value="F:proton-transporting ATP synthase activity, rotational mechanism"/>
    <property type="evidence" value="ECO:0007669"/>
    <property type="project" value="UniProtKB-UniRule"/>
</dbReference>
<dbReference type="CDD" id="cd00310">
    <property type="entry name" value="ATP-synt_Fo_a_6"/>
    <property type="match status" value="1"/>
</dbReference>
<dbReference type="FunFam" id="1.20.120.220:FF:000001">
    <property type="entry name" value="ATP synthase subunit a, chloroplastic"/>
    <property type="match status" value="1"/>
</dbReference>
<dbReference type="Gene3D" id="1.20.120.220">
    <property type="entry name" value="ATP synthase, F0 complex, subunit A"/>
    <property type="match status" value="1"/>
</dbReference>
<dbReference type="HAMAP" id="MF_01393">
    <property type="entry name" value="ATP_synth_a_bact"/>
    <property type="match status" value="1"/>
</dbReference>
<dbReference type="InterPro" id="IPR045082">
    <property type="entry name" value="ATP_syn_F0_a_bact/chloroplast"/>
</dbReference>
<dbReference type="InterPro" id="IPR000568">
    <property type="entry name" value="ATP_synth_F0_asu"/>
</dbReference>
<dbReference type="InterPro" id="IPR023011">
    <property type="entry name" value="ATP_synth_F0_asu_AS"/>
</dbReference>
<dbReference type="InterPro" id="IPR035908">
    <property type="entry name" value="F0_ATP_A_sf"/>
</dbReference>
<dbReference type="NCBIfam" id="TIGR01131">
    <property type="entry name" value="ATP_synt_6_or_A"/>
    <property type="match status" value="1"/>
</dbReference>
<dbReference type="PANTHER" id="PTHR42823">
    <property type="entry name" value="ATP SYNTHASE SUBUNIT A, CHLOROPLASTIC"/>
    <property type="match status" value="1"/>
</dbReference>
<dbReference type="PANTHER" id="PTHR42823:SF3">
    <property type="entry name" value="ATP SYNTHASE SUBUNIT A, CHLOROPLASTIC"/>
    <property type="match status" value="1"/>
</dbReference>
<dbReference type="Pfam" id="PF00119">
    <property type="entry name" value="ATP-synt_A"/>
    <property type="match status" value="1"/>
</dbReference>
<dbReference type="PRINTS" id="PR00123">
    <property type="entry name" value="ATPASEA"/>
</dbReference>
<dbReference type="SUPFAM" id="SSF81336">
    <property type="entry name" value="F1F0 ATP synthase subunit A"/>
    <property type="match status" value="1"/>
</dbReference>
<dbReference type="PROSITE" id="PS00449">
    <property type="entry name" value="ATPASE_A"/>
    <property type="match status" value="1"/>
</dbReference>
<comment type="function">
    <text evidence="1">Key component of the proton channel; it plays a direct role in the translocation of protons across the membrane.</text>
</comment>
<comment type="subunit">
    <text evidence="1">F-type ATPases have 2 components, CF(1) - the catalytic core - and CF(0) - the membrane proton channel. CF(1) has five subunits: alpha(3), beta(3), gamma(1), delta(1), epsilon(1). CF(0) has four main subunits: a, b, b' and c.</text>
</comment>
<comment type="subcellular location">
    <subcellularLocation>
        <location evidence="1">Plastid</location>
        <location evidence="1">Chloroplast thylakoid membrane</location>
        <topology evidence="1">Multi-pass membrane protein</topology>
    </subcellularLocation>
</comment>
<comment type="similarity">
    <text evidence="1">Belongs to the ATPase A chain family.</text>
</comment>
<feature type="chain" id="PRO_0000362561" description="ATP synthase subunit a, chloroplastic">
    <location>
        <begin position="1"/>
        <end position="247"/>
    </location>
</feature>
<feature type="transmembrane region" description="Helical" evidence="1">
    <location>
        <begin position="38"/>
        <end position="58"/>
    </location>
</feature>
<feature type="transmembrane region" description="Helical" evidence="1">
    <location>
        <begin position="95"/>
        <end position="115"/>
    </location>
</feature>
<feature type="transmembrane region" description="Helical" evidence="1">
    <location>
        <begin position="134"/>
        <end position="154"/>
    </location>
</feature>
<feature type="transmembrane region" description="Helical" evidence="1">
    <location>
        <begin position="199"/>
        <end position="219"/>
    </location>
</feature>
<feature type="transmembrane region" description="Helical" evidence="1">
    <location>
        <begin position="220"/>
        <end position="240"/>
    </location>
</feature>
<protein>
    <recommendedName>
        <fullName evidence="1">ATP synthase subunit a, chloroplastic</fullName>
    </recommendedName>
    <alternativeName>
        <fullName evidence="1">ATP synthase F0 sector subunit a</fullName>
    </alternativeName>
    <alternativeName>
        <fullName evidence="1">F-ATPase subunit IV</fullName>
    </alternativeName>
</protein>
<keyword id="KW-0066">ATP synthesis</keyword>
<keyword id="KW-0138">CF(0)</keyword>
<keyword id="KW-0150">Chloroplast</keyword>
<keyword id="KW-0375">Hydrogen ion transport</keyword>
<keyword id="KW-0406">Ion transport</keyword>
<keyword id="KW-0472">Membrane</keyword>
<keyword id="KW-0934">Plastid</keyword>
<keyword id="KW-0793">Thylakoid</keyword>
<keyword id="KW-0812">Transmembrane</keyword>
<keyword id="KW-1133">Transmembrane helix</keyword>
<keyword id="KW-0813">Transport</keyword>
<name>ATPI_HORVU</name>
<reference key="1">
    <citation type="journal article" date="2007" name="Theor. Appl. Genet.">
        <title>Complete chloroplast genome sequences of Hordeum vulgare, Sorghum bicolor and Agrostis stolonifera, and comparative analyses with other grass genomes.</title>
        <authorList>
            <person name="Saski C."/>
            <person name="Lee S.-B."/>
            <person name="Fjellheim S."/>
            <person name="Guda C."/>
            <person name="Jansen R.K."/>
            <person name="Luo H."/>
            <person name="Tomkins J."/>
            <person name="Rognli O.A."/>
            <person name="Daniell H."/>
            <person name="Clarke J.L."/>
        </authorList>
    </citation>
    <scope>NUCLEOTIDE SEQUENCE [LARGE SCALE GENOMIC DNA]</scope>
    <source>
        <strain>cv. Morex</strain>
    </source>
</reference>
<geneLocation type="chloroplast"/>
<proteinExistence type="inferred from homology"/>
<accession>A1E9I5</accession>
<gene>
    <name evidence="1" type="primary">atpI</name>
</gene>